<evidence type="ECO:0000250" key="1"/>
<evidence type="ECO:0000256" key="2">
    <source>
        <dbReference type="SAM" id="MobiDB-lite"/>
    </source>
</evidence>
<evidence type="ECO:0000305" key="3"/>
<keyword id="KW-0963">Cytoplasm</keyword>
<keyword id="KW-0967">Endosome</keyword>
<keyword id="KW-0472">Membrane</keyword>
<keyword id="KW-1185">Reference proteome</keyword>
<sequence>MWASIFGGKGNTNKELPKKAIIELREHINLLSKKQAHLQGQITAQENEARKFLTRGNKTMAKNALKKKKVYEGQLVKLESQMDSLEQQLFSIESANLNLETMRAMKQGAKAMKSIHSGLDIDRVDETMDEIREQVELGEEISDAISRPLYTGANEIDEDELDEELDMLAQETEPQVATKEQALPESKQALSMPNIPNTKIDESKTKIEEEEEDEDERALRELQAEMGL</sequence>
<dbReference type="EMBL" id="CR380950">
    <property type="protein sequence ID" value="CAG58409.1"/>
    <property type="molecule type" value="Genomic_DNA"/>
</dbReference>
<dbReference type="RefSeq" id="XP_445498.1">
    <property type="nucleotide sequence ID" value="XM_445498.1"/>
</dbReference>
<dbReference type="SMR" id="Q6FW96"/>
<dbReference type="FunCoup" id="Q6FW96">
    <property type="interactions" value="737"/>
</dbReference>
<dbReference type="STRING" id="284593.Q6FW96"/>
<dbReference type="EnsemblFungi" id="CAGL0D01936g-T">
    <property type="protein sequence ID" value="CAGL0D01936g-T-p1"/>
    <property type="gene ID" value="CAGL0D01936g"/>
</dbReference>
<dbReference type="GeneID" id="2887075"/>
<dbReference type="KEGG" id="cgr:2887075"/>
<dbReference type="CGD" id="CAL0128285">
    <property type="gene designation" value="SNF7"/>
</dbReference>
<dbReference type="VEuPathDB" id="FungiDB:B1J91_D01936g"/>
<dbReference type="VEuPathDB" id="FungiDB:CAGL0D01936g"/>
<dbReference type="eggNOG" id="KOG1656">
    <property type="taxonomic scope" value="Eukaryota"/>
</dbReference>
<dbReference type="HOGENOM" id="CLU_071097_1_0_1"/>
<dbReference type="InParanoid" id="Q6FW96"/>
<dbReference type="OMA" id="MKQIHGG"/>
<dbReference type="Proteomes" id="UP000002428">
    <property type="component" value="Chromosome D"/>
</dbReference>
<dbReference type="GO" id="GO:0009898">
    <property type="term" value="C:cytoplasmic side of plasma membrane"/>
    <property type="evidence" value="ECO:0007669"/>
    <property type="project" value="TreeGrafter"/>
</dbReference>
<dbReference type="GO" id="GO:0005829">
    <property type="term" value="C:cytosol"/>
    <property type="evidence" value="ECO:0007669"/>
    <property type="project" value="EnsemblFungi"/>
</dbReference>
<dbReference type="GO" id="GO:0000815">
    <property type="term" value="C:ESCRT III complex"/>
    <property type="evidence" value="ECO:0007669"/>
    <property type="project" value="EnsemblFungi"/>
</dbReference>
<dbReference type="GO" id="GO:0005771">
    <property type="term" value="C:multivesicular body"/>
    <property type="evidence" value="ECO:0007669"/>
    <property type="project" value="TreeGrafter"/>
</dbReference>
<dbReference type="GO" id="GO:0042802">
    <property type="term" value="F:identical protein binding"/>
    <property type="evidence" value="ECO:0007669"/>
    <property type="project" value="EnsemblFungi"/>
</dbReference>
<dbReference type="GO" id="GO:1904669">
    <property type="term" value="P:ATP export"/>
    <property type="evidence" value="ECO:0007669"/>
    <property type="project" value="EnsemblFungi"/>
</dbReference>
<dbReference type="GO" id="GO:0070676">
    <property type="term" value="P:intralumenal vesicle formation"/>
    <property type="evidence" value="ECO:0007669"/>
    <property type="project" value="EnsemblFungi"/>
</dbReference>
<dbReference type="GO" id="GO:0007031">
    <property type="term" value="P:peroxisome organization"/>
    <property type="evidence" value="ECO:0007669"/>
    <property type="project" value="EnsemblFungi"/>
</dbReference>
<dbReference type="GO" id="GO:0043328">
    <property type="term" value="P:protein transport to vacuole involved in ubiquitin-dependent protein catabolic process via the multivesicular body sorting pathway"/>
    <property type="evidence" value="ECO:0007669"/>
    <property type="project" value="EnsemblFungi"/>
</dbReference>
<dbReference type="GO" id="GO:0061709">
    <property type="term" value="P:reticulophagy"/>
    <property type="evidence" value="ECO:0007669"/>
    <property type="project" value="EnsemblFungi"/>
</dbReference>
<dbReference type="FunFam" id="1.10.287.1060:FF:000012">
    <property type="entry name" value="Vacuolar sorting protein SNF7"/>
    <property type="match status" value="1"/>
</dbReference>
<dbReference type="Gene3D" id="6.10.250.1710">
    <property type="match status" value="1"/>
</dbReference>
<dbReference type="Gene3D" id="1.10.287.1060">
    <property type="entry name" value="ESAT-6-like"/>
    <property type="match status" value="1"/>
</dbReference>
<dbReference type="InterPro" id="IPR005024">
    <property type="entry name" value="Snf7_fam"/>
</dbReference>
<dbReference type="PANTHER" id="PTHR22761">
    <property type="entry name" value="CHARGED MULTIVESICULAR BODY PROTEIN"/>
    <property type="match status" value="1"/>
</dbReference>
<dbReference type="PANTHER" id="PTHR22761:SF10">
    <property type="entry name" value="GH13992P"/>
    <property type="match status" value="1"/>
</dbReference>
<dbReference type="Pfam" id="PF03357">
    <property type="entry name" value="Snf7"/>
    <property type="match status" value="1"/>
</dbReference>
<accession>Q6FW96</accession>
<proteinExistence type="inferred from homology"/>
<comment type="function">
    <text evidence="1">Required for the sorting and concentration of proteins resulting in the entry of these proteins into the invaginating vesicles of the multivesicular body (MVB). Also required for the proteolytic cleavage of the transcription factor RIM101 in response to alkaline ambient pH (By similarity).</text>
</comment>
<comment type="subunit">
    <text evidence="1">A component of the endosomal sorting required for transport complex III (ESCRT-III).</text>
</comment>
<comment type="subcellular location">
    <subcellularLocation>
        <location evidence="1">Cytoplasm</location>
    </subcellularLocation>
    <subcellularLocation>
        <location evidence="1">Endosome membrane</location>
        <topology evidence="1">Peripheral membrane protein</topology>
    </subcellularLocation>
</comment>
<comment type="similarity">
    <text evidence="3">Belongs to the SNF7 family.</text>
</comment>
<protein>
    <recommendedName>
        <fullName>Vacuolar-sorting protein SNF7</fullName>
    </recommendedName>
    <alternativeName>
        <fullName>Vacuolar protein-sorting-associated protein 32</fullName>
    </alternativeName>
</protein>
<gene>
    <name type="primary">SNF7</name>
    <name type="synonym">VPS32</name>
    <name type="ordered locus">CAGL0D01936g</name>
</gene>
<feature type="chain" id="PRO_0000211438" description="Vacuolar-sorting protein SNF7">
    <location>
        <begin position="1"/>
        <end position="228"/>
    </location>
</feature>
<feature type="region of interest" description="Disordered" evidence="2">
    <location>
        <begin position="171"/>
        <end position="228"/>
    </location>
</feature>
<feature type="compositionally biased region" description="Polar residues" evidence="2">
    <location>
        <begin position="188"/>
        <end position="197"/>
    </location>
</feature>
<feature type="compositionally biased region" description="Basic and acidic residues" evidence="2">
    <location>
        <begin position="217"/>
        <end position="228"/>
    </location>
</feature>
<reference key="1">
    <citation type="journal article" date="2004" name="Nature">
        <title>Genome evolution in yeasts.</title>
        <authorList>
            <person name="Dujon B."/>
            <person name="Sherman D."/>
            <person name="Fischer G."/>
            <person name="Durrens P."/>
            <person name="Casaregola S."/>
            <person name="Lafontaine I."/>
            <person name="de Montigny J."/>
            <person name="Marck C."/>
            <person name="Neuveglise C."/>
            <person name="Talla E."/>
            <person name="Goffard N."/>
            <person name="Frangeul L."/>
            <person name="Aigle M."/>
            <person name="Anthouard V."/>
            <person name="Babour A."/>
            <person name="Barbe V."/>
            <person name="Barnay S."/>
            <person name="Blanchin S."/>
            <person name="Beckerich J.-M."/>
            <person name="Beyne E."/>
            <person name="Bleykasten C."/>
            <person name="Boisrame A."/>
            <person name="Boyer J."/>
            <person name="Cattolico L."/>
            <person name="Confanioleri F."/>
            <person name="de Daruvar A."/>
            <person name="Despons L."/>
            <person name="Fabre E."/>
            <person name="Fairhead C."/>
            <person name="Ferry-Dumazet H."/>
            <person name="Groppi A."/>
            <person name="Hantraye F."/>
            <person name="Hennequin C."/>
            <person name="Jauniaux N."/>
            <person name="Joyet P."/>
            <person name="Kachouri R."/>
            <person name="Kerrest A."/>
            <person name="Koszul R."/>
            <person name="Lemaire M."/>
            <person name="Lesur I."/>
            <person name="Ma L."/>
            <person name="Muller H."/>
            <person name="Nicaud J.-M."/>
            <person name="Nikolski M."/>
            <person name="Oztas S."/>
            <person name="Ozier-Kalogeropoulos O."/>
            <person name="Pellenz S."/>
            <person name="Potier S."/>
            <person name="Richard G.-F."/>
            <person name="Straub M.-L."/>
            <person name="Suleau A."/>
            <person name="Swennen D."/>
            <person name="Tekaia F."/>
            <person name="Wesolowski-Louvel M."/>
            <person name="Westhof E."/>
            <person name="Wirth B."/>
            <person name="Zeniou-Meyer M."/>
            <person name="Zivanovic Y."/>
            <person name="Bolotin-Fukuhara M."/>
            <person name="Thierry A."/>
            <person name="Bouchier C."/>
            <person name="Caudron B."/>
            <person name="Scarpelli C."/>
            <person name="Gaillardin C."/>
            <person name="Weissenbach J."/>
            <person name="Wincker P."/>
            <person name="Souciet J.-L."/>
        </authorList>
    </citation>
    <scope>NUCLEOTIDE SEQUENCE [LARGE SCALE GENOMIC DNA]</scope>
    <source>
        <strain>ATCC 2001 / BCRC 20586 / JCM 3761 / NBRC 0622 / NRRL Y-65 / CBS 138</strain>
    </source>
</reference>
<name>SNF7_CANGA</name>
<organism>
    <name type="scientific">Candida glabrata (strain ATCC 2001 / BCRC 20586 / JCM 3761 / NBRC 0622 / NRRL Y-65 / CBS 138)</name>
    <name type="common">Yeast</name>
    <name type="synonym">Nakaseomyces glabratus</name>
    <dbReference type="NCBI Taxonomy" id="284593"/>
    <lineage>
        <taxon>Eukaryota</taxon>
        <taxon>Fungi</taxon>
        <taxon>Dikarya</taxon>
        <taxon>Ascomycota</taxon>
        <taxon>Saccharomycotina</taxon>
        <taxon>Saccharomycetes</taxon>
        <taxon>Saccharomycetales</taxon>
        <taxon>Saccharomycetaceae</taxon>
        <taxon>Nakaseomyces</taxon>
    </lineage>
</organism>